<organism>
    <name type="scientific">Rattus norvegicus</name>
    <name type="common">Rat</name>
    <dbReference type="NCBI Taxonomy" id="10116"/>
    <lineage>
        <taxon>Eukaryota</taxon>
        <taxon>Metazoa</taxon>
        <taxon>Chordata</taxon>
        <taxon>Craniata</taxon>
        <taxon>Vertebrata</taxon>
        <taxon>Euteleostomi</taxon>
        <taxon>Mammalia</taxon>
        <taxon>Eutheria</taxon>
        <taxon>Euarchontoglires</taxon>
        <taxon>Glires</taxon>
        <taxon>Rodentia</taxon>
        <taxon>Myomorpha</taxon>
        <taxon>Muroidea</taxon>
        <taxon>Muridae</taxon>
        <taxon>Murinae</taxon>
        <taxon>Rattus</taxon>
    </lineage>
</organism>
<feature type="chain" id="PRO_0000323731" description="Cyclin-D-binding Myb-like transcription factor 1">
    <location>
        <begin position="1"/>
        <end position="760"/>
    </location>
</feature>
<feature type="domain" description="Myb-like 1" evidence="2">
    <location>
        <begin position="225"/>
        <end position="263"/>
    </location>
</feature>
<feature type="domain" description="HTH myb-type" evidence="3">
    <location>
        <begin position="268"/>
        <end position="333"/>
    </location>
</feature>
<feature type="domain" description="Myb-like 2" evidence="2">
    <location>
        <begin position="339"/>
        <end position="388"/>
    </location>
</feature>
<feature type="DNA-binding region" description="H-T-H motif" evidence="3">
    <location>
        <begin position="306"/>
        <end position="329"/>
    </location>
</feature>
<feature type="region of interest" description="Interaction with CCND2" evidence="1">
    <location>
        <begin position="1"/>
        <end position="237"/>
    </location>
</feature>
<feature type="region of interest" description="Disordered" evidence="4">
    <location>
        <begin position="24"/>
        <end position="63"/>
    </location>
</feature>
<feature type="region of interest" description="Required for DNA-binding" evidence="1">
    <location>
        <begin position="87"/>
        <end position="458"/>
    </location>
</feature>
<feature type="region of interest" description="Required for transcriptional activation" evidence="1">
    <location>
        <begin position="87"/>
        <end position="170"/>
    </location>
</feature>
<feature type="region of interest" description="Interaction with CCND1, CCND2 and CCND3" evidence="1">
    <location>
        <begin position="176"/>
        <end position="690"/>
    </location>
</feature>
<feature type="region of interest" description="Required for transcriptional activation" evidence="1">
    <location>
        <begin position="459"/>
        <end position="760"/>
    </location>
</feature>
<feature type="region of interest" description="Disordered" evidence="4">
    <location>
        <begin position="593"/>
        <end position="614"/>
    </location>
</feature>
<feature type="region of interest" description="Disordered" evidence="4">
    <location>
        <begin position="738"/>
        <end position="760"/>
    </location>
</feature>
<feature type="compositionally biased region" description="Acidic residues" evidence="4">
    <location>
        <begin position="37"/>
        <end position="47"/>
    </location>
</feature>
<feature type="splice variant" id="VSP_032102" description="In isoform 2." evidence="5 6">
    <original>VLIKGLKQLHENQKNNPVLLENKSGSGVPNSNCNSSVQHVQIRVARLEDNTAISPSPMAALQIPVQITHVS</original>
    <variation>A</variation>
    <location>
        <begin position="401"/>
        <end position="471"/>
    </location>
</feature>
<accession>Q66HG1</accession>
<accession>Q99MC8</accession>
<evidence type="ECO:0000250" key="1"/>
<evidence type="ECO:0000255" key="2">
    <source>
        <dbReference type="PROSITE-ProRule" id="PRU00133"/>
    </source>
</evidence>
<evidence type="ECO:0000255" key="3">
    <source>
        <dbReference type="PROSITE-ProRule" id="PRU00625"/>
    </source>
</evidence>
<evidence type="ECO:0000256" key="4">
    <source>
        <dbReference type="SAM" id="MobiDB-lite"/>
    </source>
</evidence>
<evidence type="ECO:0000303" key="5">
    <source>
    </source>
</evidence>
<evidence type="ECO:0000303" key="6">
    <source>
    </source>
</evidence>
<evidence type="ECO:0000305" key="7"/>
<protein>
    <recommendedName>
        <fullName>Cyclin-D-binding Myb-like transcription factor 1</fullName>
    </recommendedName>
</protein>
<reference key="1">
    <citation type="journal article" date="2004" name="Nature">
        <title>Genome sequence of the Brown Norway rat yields insights into mammalian evolution.</title>
        <authorList>
            <person name="Gibbs R.A."/>
            <person name="Weinstock G.M."/>
            <person name="Metzker M.L."/>
            <person name="Muzny D.M."/>
            <person name="Sodergren E.J."/>
            <person name="Scherer S."/>
            <person name="Scott G."/>
            <person name="Steffen D."/>
            <person name="Worley K.C."/>
            <person name="Burch P.E."/>
            <person name="Okwuonu G."/>
            <person name="Hines S."/>
            <person name="Lewis L."/>
            <person name="Deramo C."/>
            <person name="Delgado O."/>
            <person name="Dugan-Rocha S."/>
            <person name="Miner G."/>
            <person name="Morgan M."/>
            <person name="Hawes A."/>
            <person name="Gill R."/>
            <person name="Holt R.A."/>
            <person name="Adams M.D."/>
            <person name="Amanatides P.G."/>
            <person name="Baden-Tillson H."/>
            <person name="Barnstead M."/>
            <person name="Chin S."/>
            <person name="Evans C.A."/>
            <person name="Ferriera S."/>
            <person name="Fosler C."/>
            <person name="Glodek A."/>
            <person name="Gu Z."/>
            <person name="Jennings D."/>
            <person name="Kraft C.L."/>
            <person name="Nguyen T."/>
            <person name="Pfannkoch C.M."/>
            <person name="Sitter C."/>
            <person name="Sutton G.G."/>
            <person name="Venter J.C."/>
            <person name="Woodage T."/>
            <person name="Smith D."/>
            <person name="Lee H.-M."/>
            <person name="Gustafson E."/>
            <person name="Cahill P."/>
            <person name="Kana A."/>
            <person name="Doucette-Stamm L."/>
            <person name="Weinstock K."/>
            <person name="Fechtel K."/>
            <person name="Weiss R.B."/>
            <person name="Dunn D.M."/>
            <person name="Green E.D."/>
            <person name="Blakesley R.W."/>
            <person name="Bouffard G.G."/>
            <person name="De Jong P.J."/>
            <person name="Osoegawa K."/>
            <person name="Zhu B."/>
            <person name="Marra M."/>
            <person name="Schein J."/>
            <person name="Bosdet I."/>
            <person name="Fjell C."/>
            <person name="Jones S."/>
            <person name="Krzywinski M."/>
            <person name="Mathewson C."/>
            <person name="Siddiqui A."/>
            <person name="Wye N."/>
            <person name="McPherson J."/>
            <person name="Zhao S."/>
            <person name="Fraser C.M."/>
            <person name="Shetty J."/>
            <person name="Shatsman S."/>
            <person name="Geer K."/>
            <person name="Chen Y."/>
            <person name="Abramzon S."/>
            <person name="Nierman W.C."/>
            <person name="Havlak P.H."/>
            <person name="Chen R."/>
            <person name="Durbin K.J."/>
            <person name="Egan A."/>
            <person name="Ren Y."/>
            <person name="Song X.-Z."/>
            <person name="Li B."/>
            <person name="Liu Y."/>
            <person name="Qin X."/>
            <person name="Cawley S."/>
            <person name="Cooney A.J."/>
            <person name="D'Souza L.M."/>
            <person name="Martin K."/>
            <person name="Wu J.Q."/>
            <person name="Gonzalez-Garay M.L."/>
            <person name="Jackson A.R."/>
            <person name="Kalafus K.J."/>
            <person name="McLeod M.P."/>
            <person name="Milosavljevic A."/>
            <person name="Virk D."/>
            <person name="Volkov A."/>
            <person name="Wheeler D.A."/>
            <person name="Zhang Z."/>
            <person name="Bailey J.A."/>
            <person name="Eichler E.E."/>
            <person name="Tuzun E."/>
            <person name="Birney E."/>
            <person name="Mongin E."/>
            <person name="Ureta-Vidal A."/>
            <person name="Woodwark C."/>
            <person name="Zdobnov E."/>
            <person name="Bork P."/>
            <person name="Suyama M."/>
            <person name="Torrents D."/>
            <person name="Alexandersson M."/>
            <person name="Trask B.J."/>
            <person name="Young J.M."/>
            <person name="Huang H."/>
            <person name="Wang H."/>
            <person name="Xing H."/>
            <person name="Daniels S."/>
            <person name="Gietzen D."/>
            <person name="Schmidt J."/>
            <person name="Stevens K."/>
            <person name="Vitt U."/>
            <person name="Wingrove J."/>
            <person name="Camara F."/>
            <person name="Mar Alba M."/>
            <person name="Abril J.F."/>
            <person name="Guigo R."/>
            <person name="Smit A."/>
            <person name="Dubchak I."/>
            <person name="Rubin E.M."/>
            <person name="Couronne O."/>
            <person name="Poliakov A."/>
            <person name="Huebner N."/>
            <person name="Ganten D."/>
            <person name="Goesele C."/>
            <person name="Hummel O."/>
            <person name="Kreitler T."/>
            <person name="Lee Y.-A."/>
            <person name="Monti J."/>
            <person name="Schulz H."/>
            <person name="Zimdahl H."/>
            <person name="Himmelbauer H."/>
            <person name="Lehrach H."/>
            <person name="Jacob H.J."/>
            <person name="Bromberg S."/>
            <person name="Gullings-Handley J."/>
            <person name="Jensen-Seaman M.I."/>
            <person name="Kwitek A.E."/>
            <person name="Lazar J."/>
            <person name="Pasko D."/>
            <person name="Tonellato P.J."/>
            <person name="Twigger S."/>
            <person name="Ponting C.P."/>
            <person name="Duarte J.M."/>
            <person name="Rice S."/>
            <person name="Goodstadt L."/>
            <person name="Beatson S.A."/>
            <person name="Emes R.D."/>
            <person name="Winter E.E."/>
            <person name="Webber C."/>
            <person name="Brandt P."/>
            <person name="Nyakatura G."/>
            <person name="Adetobi M."/>
            <person name="Chiaromonte F."/>
            <person name="Elnitski L."/>
            <person name="Eswara P."/>
            <person name="Hardison R.C."/>
            <person name="Hou M."/>
            <person name="Kolbe D."/>
            <person name="Makova K."/>
            <person name="Miller W."/>
            <person name="Nekrutenko A."/>
            <person name="Riemer C."/>
            <person name="Schwartz S."/>
            <person name="Taylor J."/>
            <person name="Yang S."/>
            <person name="Zhang Y."/>
            <person name="Lindpaintner K."/>
            <person name="Andrews T.D."/>
            <person name="Caccamo M."/>
            <person name="Clamp M."/>
            <person name="Clarke L."/>
            <person name="Curwen V."/>
            <person name="Durbin R.M."/>
            <person name="Eyras E."/>
            <person name="Searle S.M."/>
            <person name="Cooper G.M."/>
            <person name="Batzoglou S."/>
            <person name="Brudno M."/>
            <person name="Sidow A."/>
            <person name="Stone E.A."/>
            <person name="Payseur B.A."/>
            <person name="Bourque G."/>
            <person name="Lopez-Otin C."/>
            <person name="Puente X.S."/>
            <person name="Chakrabarti K."/>
            <person name="Chatterji S."/>
            <person name="Dewey C."/>
            <person name="Pachter L."/>
            <person name="Bray N."/>
            <person name="Yap V.B."/>
            <person name="Caspi A."/>
            <person name="Tesler G."/>
            <person name="Pevzner P.A."/>
            <person name="Haussler D."/>
            <person name="Roskin K.M."/>
            <person name="Baertsch R."/>
            <person name="Clawson H."/>
            <person name="Furey T.S."/>
            <person name="Hinrichs A.S."/>
            <person name="Karolchik D."/>
            <person name="Kent W.J."/>
            <person name="Rosenbloom K.R."/>
            <person name="Trumbower H."/>
            <person name="Weirauch M."/>
            <person name="Cooper D.N."/>
            <person name="Stenson P.D."/>
            <person name="Ma B."/>
            <person name="Brent M."/>
            <person name="Arumugam M."/>
            <person name="Shteynberg D."/>
            <person name="Copley R.R."/>
            <person name="Taylor M.S."/>
            <person name="Riethman H."/>
            <person name="Mudunuri U."/>
            <person name="Peterson J."/>
            <person name="Guyer M."/>
            <person name="Felsenfeld A."/>
            <person name="Old S."/>
            <person name="Mockrin S."/>
            <person name="Collins F.S."/>
        </authorList>
    </citation>
    <scope>NUCLEOTIDE SEQUENCE [LARGE SCALE GENOMIC DNA]</scope>
</reference>
<reference key="2">
    <citation type="journal article" date="2004" name="Genome Res.">
        <title>The status, quality, and expansion of the NIH full-length cDNA project: the Mammalian Gene Collection (MGC).</title>
        <authorList>
            <consortium name="The MGC Project Team"/>
        </authorList>
    </citation>
    <scope>NUCLEOTIDE SEQUENCE [LARGE SCALE MRNA] (ISOFORM 2)</scope>
    <source>
        <tissue>Kidney</tissue>
    </source>
</reference>
<reference key="3">
    <citation type="journal article" date="2001" name="Mamm. Genome">
        <title>A dual-color FISH gene map of the proximal region of rat chromosome 4 and comparative analysis in human and mouse.</title>
        <authorList>
            <person name="Walentinsson A."/>
            <person name="Helou K."/>
            <person name="Levan G."/>
        </authorList>
    </citation>
    <scope>NUCLEOTIDE SEQUENCE [MRNA] OF 449-527 (ISOFORM 2)</scope>
    <source>
        <strain>Brown Norway</strain>
    </source>
</reference>
<name>DMTF1_RAT</name>
<gene>
    <name type="primary">Dmtf1</name>
</gene>
<dbReference type="EMBL" id="AABR03031952">
    <property type="status" value="NOT_ANNOTATED_CDS"/>
    <property type="molecule type" value="Genomic_DNA"/>
</dbReference>
<dbReference type="EMBL" id="BC081880">
    <property type="protein sequence ID" value="AAH81880.1"/>
    <property type="molecule type" value="mRNA"/>
</dbReference>
<dbReference type="EMBL" id="AF352170">
    <property type="protein sequence ID" value="AAK32706.1"/>
    <property type="molecule type" value="mRNA"/>
</dbReference>
<dbReference type="RefSeq" id="NP_446145.1">
    <molecule id="Q66HG1-2"/>
    <property type="nucleotide sequence ID" value="NM_053693.1"/>
</dbReference>
<dbReference type="RefSeq" id="XP_017447870.1">
    <molecule id="Q66HG1-1"/>
    <property type="nucleotide sequence ID" value="XM_017592381.3"/>
</dbReference>
<dbReference type="SMR" id="Q66HG1"/>
<dbReference type="FunCoup" id="Q66HG1">
    <property type="interactions" value="3143"/>
</dbReference>
<dbReference type="STRING" id="10116.ENSRNOP00000046030"/>
<dbReference type="GlyGen" id="Q66HG1">
    <property type="glycosylation" value="1 site"/>
</dbReference>
<dbReference type="PhosphoSitePlus" id="Q66HG1"/>
<dbReference type="PaxDb" id="10116-ENSRNOP00000046030"/>
<dbReference type="Ensembl" id="ENSRNOT00000044810.7">
    <molecule id="Q66HG1-1"/>
    <property type="protein sequence ID" value="ENSRNOP00000046030.3"/>
    <property type="gene ID" value="ENSRNOG00000005908.9"/>
</dbReference>
<dbReference type="GeneID" id="114485"/>
<dbReference type="KEGG" id="rno:114485"/>
<dbReference type="AGR" id="RGD:70966"/>
<dbReference type="CTD" id="9988"/>
<dbReference type="RGD" id="70966">
    <property type="gene designation" value="Dmtf1"/>
</dbReference>
<dbReference type="eggNOG" id="KOG0051">
    <property type="taxonomic scope" value="Eukaryota"/>
</dbReference>
<dbReference type="GeneTree" id="ENSGT00940000156016"/>
<dbReference type="HOGENOM" id="CLU_021360_1_0_1"/>
<dbReference type="InParanoid" id="Q66HG1"/>
<dbReference type="OMA" id="LQCHTPR"/>
<dbReference type="OrthoDB" id="39591at2759"/>
<dbReference type="PhylomeDB" id="Q66HG1"/>
<dbReference type="TreeFam" id="TF333537"/>
<dbReference type="PRO" id="PR:Q66HG1"/>
<dbReference type="Proteomes" id="UP000002494">
    <property type="component" value="Chromosome 4"/>
</dbReference>
<dbReference type="Bgee" id="ENSRNOG00000005908">
    <property type="expression patterns" value="Expressed in thymus and 20 other cell types or tissues"/>
</dbReference>
<dbReference type="GO" id="GO:0005634">
    <property type="term" value="C:nucleus"/>
    <property type="evidence" value="ECO:0000318"/>
    <property type="project" value="GO_Central"/>
</dbReference>
<dbReference type="GO" id="GO:0001228">
    <property type="term" value="F:DNA-binding transcription activator activity, RNA polymerase II-specific"/>
    <property type="evidence" value="ECO:0000266"/>
    <property type="project" value="RGD"/>
</dbReference>
<dbReference type="GO" id="GO:0000981">
    <property type="term" value="F:DNA-binding transcription factor activity, RNA polymerase II-specific"/>
    <property type="evidence" value="ECO:0000318"/>
    <property type="project" value="GO_Central"/>
</dbReference>
<dbReference type="GO" id="GO:0000978">
    <property type="term" value="F:RNA polymerase II cis-regulatory region sequence-specific DNA binding"/>
    <property type="evidence" value="ECO:0000266"/>
    <property type="project" value="RGD"/>
</dbReference>
<dbReference type="GO" id="GO:0045944">
    <property type="term" value="P:positive regulation of transcription by RNA polymerase II"/>
    <property type="evidence" value="ECO:0000266"/>
    <property type="project" value="RGD"/>
</dbReference>
<dbReference type="GO" id="GO:0006357">
    <property type="term" value="P:regulation of transcription by RNA polymerase II"/>
    <property type="evidence" value="ECO:0000318"/>
    <property type="project" value="GO_Central"/>
</dbReference>
<dbReference type="CDD" id="cd00167">
    <property type="entry name" value="SANT"/>
    <property type="match status" value="3"/>
</dbReference>
<dbReference type="FunFam" id="1.10.10.60:FF:000114">
    <property type="entry name" value="cyclin-D-binding Myb-like transcription factor 1 isoform X1"/>
    <property type="match status" value="1"/>
</dbReference>
<dbReference type="FunFam" id="1.10.10.60:FF:000139">
    <property type="entry name" value="cyclin-D-binding Myb-like transcription factor 1 isoform X2"/>
    <property type="match status" value="1"/>
</dbReference>
<dbReference type="Gene3D" id="1.10.10.60">
    <property type="entry name" value="Homeodomain-like"/>
    <property type="match status" value="2"/>
</dbReference>
<dbReference type="InterPro" id="IPR051651">
    <property type="entry name" value="DMTF1_DNA-bind_reg"/>
</dbReference>
<dbReference type="InterPro" id="IPR046775">
    <property type="entry name" value="DMTF1_N"/>
</dbReference>
<dbReference type="InterPro" id="IPR009057">
    <property type="entry name" value="Homeodomain-like_sf"/>
</dbReference>
<dbReference type="InterPro" id="IPR017930">
    <property type="entry name" value="Myb_dom"/>
</dbReference>
<dbReference type="InterPro" id="IPR001005">
    <property type="entry name" value="SANT/Myb"/>
</dbReference>
<dbReference type="PANTHER" id="PTHR46380">
    <property type="entry name" value="CYCLIN-D-BINDING MYB-LIKE TRANSCRIPTION FACTOR 1"/>
    <property type="match status" value="1"/>
</dbReference>
<dbReference type="PANTHER" id="PTHR46380:SF1">
    <property type="entry name" value="CYCLIN-D-BINDING MYB-LIKE TRANSCRIPTION FACTOR 1"/>
    <property type="match status" value="1"/>
</dbReference>
<dbReference type="Pfam" id="PF20588">
    <property type="entry name" value="DMTF1_N"/>
    <property type="match status" value="1"/>
</dbReference>
<dbReference type="Pfam" id="PF00249">
    <property type="entry name" value="Myb_DNA-binding"/>
    <property type="match status" value="2"/>
</dbReference>
<dbReference type="SMART" id="SM00717">
    <property type="entry name" value="SANT"/>
    <property type="match status" value="3"/>
</dbReference>
<dbReference type="SUPFAM" id="SSF46689">
    <property type="entry name" value="Homeodomain-like"/>
    <property type="match status" value="3"/>
</dbReference>
<dbReference type="PROSITE" id="PS51294">
    <property type="entry name" value="HTH_MYB"/>
    <property type="match status" value="1"/>
</dbReference>
<dbReference type="PROSITE" id="PS50090">
    <property type="entry name" value="MYB_LIKE"/>
    <property type="match status" value="2"/>
</dbReference>
<comment type="function">
    <text evidence="1">Transcriptional activator which activates the CDKN2A/ARF locus in response to Ras-Raf signaling, thereby promoting p53/TP53-dependent growth arrest. Binds to the consensus sequence 5'-CCCG[GT]ATGT-3'.</text>
</comment>
<comment type="subunit">
    <text evidence="1">Interacts with the D-type cyclins CCND1, CCND2 and CCND3. Interaction with D-type cyclins may modulate transcriptional activation by this protein.</text>
</comment>
<comment type="subcellular location">
    <subcellularLocation>
        <location evidence="3">Nucleus</location>
    </subcellularLocation>
</comment>
<comment type="alternative products">
    <event type="alternative splicing"/>
    <isoform>
        <id>Q66HG1-1</id>
        <name>1</name>
        <sequence type="displayed"/>
    </isoform>
    <isoform>
        <id>Q66HG1-2</id>
        <name>2</name>
        <sequence type="described" ref="VSP_032102"/>
    </isoform>
</comment>
<comment type="PTM">
    <text evidence="1">Phosphorylated by the cyclin-D2/CDK4, cyclin-D3/CDK4 and cyclin-D2/CDK6 complexes and to a lesser extent by the cyclin-D1/CDK4 complex.</text>
</comment>
<comment type="similarity">
    <text evidence="7">Belongs to the DMTF1 family.</text>
</comment>
<proteinExistence type="evidence at transcript level"/>
<keyword id="KW-0010">Activator</keyword>
<keyword id="KW-0025">Alternative splicing</keyword>
<keyword id="KW-0131">Cell cycle</keyword>
<keyword id="KW-0238">DNA-binding</keyword>
<keyword id="KW-0539">Nucleus</keyword>
<keyword id="KW-0597">Phosphoprotein</keyword>
<keyword id="KW-1185">Reference proteome</keyword>
<keyword id="KW-0677">Repeat</keyword>
<keyword id="KW-0804">Transcription</keyword>
<keyword id="KW-0805">Transcription regulation</keyword>
<keyword id="KW-0043">Tumor suppressor</keyword>
<sequence>MSTVEEDSDTVTVETVNSVTFTQDTDGNLILHCPQNDPDEIDSEDSTEPPHKRLCLSSEDDQSIDDSTPCISVVALPLSENDQSFEVTMTATTEVADDELSEGTVTQIQILQNDQLDEMSPLGTEEVSAVSQAWFTTKEDKDSLTNKGHKWKQGMWSKEEIDILMNNIERYLKARGIKDATEIIFEMSKDERKDFYRTIAWGLNRPLFAVYRRVLRMYDDRNHVGKYTPEEIEKLKELRIKHGNDWATIGAALGRSASSVKDRCRLMKDTCNTGKWTEEEEKRLAEVVHELTSTEPGDIVTQGVSWAAVAERVGTRSEKQCRSKWLNYLNWKQSGGTEWTKEDEINLILRIAELDVADENDINWDLLAEGWSSVRSPQWLRSKWWTIKRQIANHKDVSFPVLIKGLKQLHENQKNNPVLLENKSGSGVPNSNCNSSVQHVQIRVARLEDNTAISPSPMAALQIPVQITHVSSTDSPAASVDSETITLNSGTLQTFEILPSFHLQPTGTPGTYLLQTSSSQGLPLTLTTSPTVTLAAAAPASPEQIIVHALSPEHLLNTSDNVTVQCHTPRVIIQTVATEDITSSISQAELTADSDLHSSDFPEPPDALEADTFPDEIPRPKMTIQPSFNNAHVSKYSDQNSTELMNSVMVRTEEEIADTDLKQEPPSDLASAYVTEDLESPTIVHQVHQTIDDETILIVPSPHGFIQASDGIDAESVLPLTTLTDPIFQHHQEESNIIGSSLGSPVSEDSKDVEDLVNCH</sequence>